<dbReference type="EC" id="3.4.21.92" evidence="1"/>
<dbReference type="EMBL" id="AM933172">
    <property type="protein sequence ID" value="CAR32016.1"/>
    <property type="molecule type" value="Genomic_DNA"/>
</dbReference>
<dbReference type="RefSeq" id="WP_000122257.1">
    <property type="nucleotide sequence ID" value="NC_011294.1"/>
</dbReference>
<dbReference type="SMR" id="B5QTJ6"/>
<dbReference type="MEROPS" id="S14.001"/>
<dbReference type="GeneID" id="66754911"/>
<dbReference type="KEGG" id="set:SEN0430"/>
<dbReference type="HOGENOM" id="CLU_058707_3_2_6"/>
<dbReference type="Proteomes" id="UP000000613">
    <property type="component" value="Chromosome"/>
</dbReference>
<dbReference type="GO" id="GO:0005737">
    <property type="term" value="C:cytoplasm"/>
    <property type="evidence" value="ECO:0007669"/>
    <property type="project" value="UniProtKB-SubCell"/>
</dbReference>
<dbReference type="GO" id="GO:0009368">
    <property type="term" value="C:endopeptidase Clp complex"/>
    <property type="evidence" value="ECO:0007669"/>
    <property type="project" value="TreeGrafter"/>
</dbReference>
<dbReference type="GO" id="GO:0004176">
    <property type="term" value="F:ATP-dependent peptidase activity"/>
    <property type="evidence" value="ECO:0007669"/>
    <property type="project" value="InterPro"/>
</dbReference>
<dbReference type="GO" id="GO:0051117">
    <property type="term" value="F:ATPase binding"/>
    <property type="evidence" value="ECO:0007669"/>
    <property type="project" value="TreeGrafter"/>
</dbReference>
<dbReference type="GO" id="GO:0004252">
    <property type="term" value="F:serine-type endopeptidase activity"/>
    <property type="evidence" value="ECO:0007669"/>
    <property type="project" value="UniProtKB-UniRule"/>
</dbReference>
<dbReference type="GO" id="GO:0006515">
    <property type="term" value="P:protein quality control for misfolded or incompletely synthesized proteins"/>
    <property type="evidence" value="ECO:0007669"/>
    <property type="project" value="TreeGrafter"/>
</dbReference>
<dbReference type="CDD" id="cd07017">
    <property type="entry name" value="S14_ClpP_2"/>
    <property type="match status" value="1"/>
</dbReference>
<dbReference type="FunFam" id="3.90.226.10:FF:000001">
    <property type="entry name" value="ATP-dependent Clp protease proteolytic subunit"/>
    <property type="match status" value="1"/>
</dbReference>
<dbReference type="Gene3D" id="3.90.226.10">
    <property type="entry name" value="2-enoyl-CoA Hydratase, Chain A, domain 1"/>
    <property type="match status" value="1"/>
</dbReference>
<dbReference type="HAMAP" id="MF_00444">
    <property type="entry name" value="ClpP"/>
    <property type="match status" value="1"/>
</dbReference>
<dbReference type="InterPro" id="IPR001907">
    <property type="entry name" value="ClpP"/>
</dbReference>
<dbReference type="InterPro" id="IPR029045">
    <property type="entry name" value="ClpP/crotonase-like_dom_sf"/>
</dbReference>
<dbReference type="InterPro" id="IPR023562">
    <property type="entry name" value="ClpP/TepA"/>
</dbReference>
<dbReference type="InterPro" id="IPR033135">
    <property type="entry name" value="ClpP_His_AS"/>
</dbReference>
<dbReference type="InterPro" id="IPR018215">
    <property type="entry name" value="ClpP_Ser_AS"/>
</dbReference>
<dbReference type="NCBIfam" id="TIGR00493">
    <property type="entry name" value="clpP"/>
    <property type="match status" value="1"/>
</dbReference>
<dbReference type="NCBIfam" id="NF001368">
    <property type="entry name" value="PRK00277.1"/>
    <property type="match status" value="1"/>
</dbReference>
<dbReference type="NCBIfam" id="NF009205">
    <property type="entry name" value="PRK12553.1"/>
    <property type="match status" value="1"/>
</dbReference>
<dbReference type="PANTHER" id="PTHR10381">
    <property type="entry name" value="ATP-DEPENDENT CLP PROTEASE PROTEOLYTIC SUBUNIT"/>
    <property type="match status" value="1"/>
</dbReference>
<dbReference type="PANTHER" id="PTHR10381:SF70">
    <property type="entry name" value="ATP-DEPENDENT CLP PROTEASE PROTEOLYTIC SUBUNIT"/>
    <property type="match status" value="1"/>
</dbReference>
<dbReference type="Pfam" id="PF00574">
    <property type="entry name" value="CLP_protease"/>
    <property type="match status" value="1"/>
</dbReference>
<dbReference type="PRINTS" id="PR00127">
    <property type="entry name" value="CLPPROTEASEP"/>
</dbReference>
<dbReference type="SUPFAM" id="SSF52096">
    <property type="entry name" value="ClpP/crotonase"/>
    <property type="match status" value="1"/>
</dbReference>
<dbReference type="PROSITE" id="PS00382">
    <property type="entry name" value="CLP_PROTEASE_HIS"/>
    <property type="match status" value="1"/>
</dbReference>
<dbReference type="PROSITE" id="PS00381">
    <property type="entry name" value="CLP_PROTEASE_SER"/>
    <property type="match status" value="1"/>
</dbReference>
<reference key="1">
    <citation type="journal article" date="2008" name="Genome Res.">
        <title>Comparative genome analysis of Salmonella enteritidis PT4 and Salmonella gallinarum 287/91 provides insights into evolutionary and host adaptation pathways.</title>
        <authorList>
            <person name="Thomson N.R."/>
            <person name="Clayton D.J."/>
            <person name="Windhorst D."/>
            <person name="Vernikos G."/>
            <person name="Davidson S."/>
            <person name="Churcher C."/>
            <person name="Quail M.A."/>
            <person name="Stevens M."/>
            <person name="Jones M.A."/>
            <person name="Watson M."/>
            <person name="Barron A."/>
            <person name="Layton A."/>
            <person name="Pickard D."/>
            <person name="Kingsley R.A."/>
            <person name="Bignell A."/>
            <person name="Clark L."/>
            <person name="Harris B."/>
            <person name="Ormond D."/>
            <person name="Abdellah Z."/>
            <person name="Brooks K."/>
            <person name="Cherevach I."/>
            <person name="Chillingworth T."/>
            <person name="Woodward J."/>
            <person name="Norberczak H."/>
            <person name="Lord A."/>
            <person name="Arrowsmith C."/>
            <person name="Jagels K."/>
            <person name="Moule S."/>
            <person name="Mungall K."/>
            <person name="Saunders M."/>
            <person name="Whitehead S."/>
            <person name="Chabalgoity J.A."/>
            <person name="Maskell D."/>
            <person name="Humphreys T."/>
            <person name="Roberts M."/>
            <person name="Barrow P.A."/>
            <person name="Dougan G."/>
            <person name="Parkhill J."/>
        </authorList>
    </citation>
    <scope>NUCLEOTIDE SEQUENCE [LARGE SCALE GENOMIC DNA]</scope>
    <source>
        <strain>P125109</strain>
    </source>
</reference>
<protein>
    <recommendedName>
        <fullName evidence="1">ATP-dependent Clp protease proteolytic subunit</fullName>
        <ecNumber evidence="1">3.4.21.92</ecNumber>
    </recommendedName>
    <alternativeName>
        <fullName evidence="1">Endopeptidase Clp</fullName>
    </alternativeName>
</protein>
<accession>B5QTJ6</accession>
<keyword id="KW-0963">Cytoplasm</keyword>
<keyword id="KW-0378">Hydrolase</keyword>
<keyword id="KW-0645">Protease</keyword>
<keyword id="KW-0720">Serine protease</keyword>
<gene>
    <name evidence="1" type="primary">clpP</name>
    <name type="ordered locus">SEN0430</name>
</gene>
<sequence length="207" mass="23177">MSYSGERDNLAPHMALVPMVIEQTSRGERSFDIYSRLLKERVIFLTGQVEDHMANLIVAQMLFLEAENPEKDIYLYINSPGGVITAGMSIYDTMQFIKPDVSTICMGQAASMGAFLLTAGAKGKRFCLPNSRVMIHQPLGGYQGQATDIEIHAREILKVKGRMNELMAHHTGQSLEQIERDTERDRFLSAPEAVEYGLVDSILTHRN</sequence>
<proteinExistence type="inferred from homology"/>
<feature type="chain" id="PRO_1000189662" description="ATP-dependent Clp protease proteolytic subunit">
    <location>
        <begin position="1"/>
        <end position="207"/>
    </location>
</feature>
<feature type="active site" description="Nucleophile" evidence="1">
    <location>
        <position position="111"/>
    </location>
</feature>
<feature type="active site" evidence="1">
    <location>
        <position position="136"/>
    </location>
</feature>
<name>CLPP_SALEP</name>
<evidence type="ECO:0000255" key="1">
    <source>
        <dbReference type="HAMAP-Rule" id="MF_00444"/>
    </source>
</evidence>
<comment type="function">
    <text evidence="1">Cleaves peptides in various proteins in a process that requires ATP hydrolysis. Has a chymotrypsin-like activity. Plays a major role in the degradation of misfolded proteins.</text>
</comment>
<comment type="catalytic activity">
    <reaction evidence="1">
        <text>Hydrolysis of proteins to small peptides in the presence of ATP and magnesium. alpha-casein is the usual test substrate. In the absence of ATP, only oligopeptides shorter than five residues are hydrolyzed (such as succinyl-Leu-Tyr-|-NHMec, and Leu-Tyr-Leu-|-Tyr-Trp, in which cleavage of the -Tyr-|-Leu- and -Tyr-|-Trp bonds also occurs).</text>
        <dbReference type="EC" id="3.4.21.92"/>
    </reaction>
</comment>
<comment type="subunit">
    <text evidence="1">Fourteen ClpP subunits assemble into 2 heptameric rings which stack back to back to give a disk-like structure with a central cavity, resembling the structure of eukaryotic proteasomes. Component of the ClpAP and ClpXP complexes.</text>
</comment>
<comment type="subcellular location">
    <subcellularLocation>
        <location evidence="1">Cytoplasm</location>
    </subcellularLocation>
</comment>
<comment type="similarity">
    <text evidence="1">Belongs to the peptidase S14 family.</text>
</comment>
<organism>
    <name type="scientific">Salmonella enteritidis PT4 (strain P125109)</name>
    <dbReference type="NCBI Taxonomy" id="550537"/>
    <lineage>
        <taxon>Bacteria</taxon>
        <taxon>Pseudomonadati</taxon>
        <taxon>Pseudomonadota</taxon>
        <taxon>Gammaproteobacteria</taxon>
        <taxon>Enterobacterales</taxon>
        <taxon>Enterobacteriaceae</taxon>
        <taxon>Salmonella</taxon>
    </lineage>
</organism>